<geneLocation type="plasmid">
    <name>sym pNGR234a</name>
</geneLocation>
<proteinExistence type="predicted"/>
<protein>
    <recommendedName>
        <fullName>Uncharacterized protein y4wH</fullName>
    </recommendedName>
</protein>
<reference key="1">
    <citation type="journal article" date="1997" name="Nature">
        <title>Molecular basis of symbiosis between Rhizobium and legumes.</title>
        <authorList>
            <person name="Freiberg C.A."/>
            <person name="Fellay R."/>
            <person name="Bairoch A."/>
            <person name="Broughton W.J."/>
            <person name="Rosenthal A."/>
            <person name="Perret X."/>
        </authorList>
    </citation>
    <scope>NUCLEOTIDE SEQUENCE [LARGE SCALE GENOMIC DNA]</scope>
    <source>
        <strain>NBRC 101917 / NGR234</strain>
    </source>
</reference>
<reference key="2">
    <citation type="journal article" date="2009" name="Appl. Environ. Microbiol.">
        <title>Rhizobium sp. strain NGR234 possesses a remarkable number of secretion systems.</title>
        <authorList>
            <person name="Schmeisser C."/>
            <person name="Liesegang H."/>
            <person name="Krysciak D."/>
            <person name="Bakkou N."/>
            <person name="Le Quere A."/>
            <person name="Wollherr A."/>
            <person name="Heinemeyer I."/>
            <person name="Morgenstern B."/>
            <person name="Pommerening-Roeser A."/>
            <person name="Flores M."/>
            <person name="Palacios R."/>
            <person name="Brenner S."/>
            <person name="Gottschalk G."/>
            <person name="Schmitz R.A."/>
            <person name="Broughton W.J."/>
            <person name="Perret X."/>
            <person name="Strittmatter A.W."/>
            <person name="Streit W.R."/>
        </authorList>
    </citation>
    <scope>NUCLEOTIDE SEQUENCE [LARGE SCALE GENOMIC DNA]</scope>
    <source>
        <strain>NBRC 101917 / NGR234</strain>
    </source>
</reference>
<feature type="chain" id="PRO_0000200957" description="Uncharacterized protein y4wH">
    <location>
        <begin position="1"/>
        <end position="145"/>
    </location>
</feature>
<gene>
    <name type="ordered locus">NGR_a00970</name>
    <name type="ORF">y4wH</name>
</gene>
<sequence length="145" mass="15639">MKHIVATLFGILFATAANAAGDSHVLASFPELERALTTGKPVTVTVDLGMCTPATSDTPSTKTRGGVSIDGYRITSDGTLAFADQHFTIDRDGKPVIQFLRYRIRPDGGAEFTMVVFNVPSYERKGTSRVYKCSIGHGLSFFSSQ</sequence>
<dbReference type="EMBL" id="U00090">
    <property type="protein sequence ID" value="AAB91915.1"/>
    <property type="molecule type" value="Genomic_DNA"/>
</dbReference>
<dbReference type="RefSeq" id="NP_444128.1">
    <property type="nucleotide sequence ID" value="NC_000914.2"/>
</dbReference>
<dbReference type="RefSeq" id="WP_010875138.1">
    <property type="nucleotide sequence ID" value="NC_000914.2"/>
</dbReference>
<dbReference type="SMR" id="P55686"/>
<dbReference type="KEGG" id="rhi:NGR_a00970"/>
<dbReference type="eggNOG" id="ENOG5032RCG">
    <property type="taxonomic scope" value="Bacteria"/>
</dbReference>
<dbReference type="HOGENOM" id="CLU_139692_1_0_5"/>
<dbReference type="OrthoDB" id="8251155at2"/>
<dbReference type="Proteomes" id="UP000001054">
    <property type="component" value="Plasmid pNGR234a"/>
</dbReference>
<dbReference type="InterPro" id="IPR010694">
    <property type="entry name" value="Uncharacterised_VirK"/>
</dbReference>
<dbReference type="Pfam" id="PF06903">
    <property type="entry name" value="VirK"/>
    <property type="match status" value="1"/>
</dbReference>
<keyword id="KW-0614">Plasmid</keyword>
<keyword id="KW-1185">Reference proteome</keyword>
<accession>P55686</accession>
<name>Y4WH_SINFN</name>
<organism>
    <name type="scientific">Sinorhizobium fredii (strain NBRC 101917 / NGR234)</name>
    <dbReference type="NCBI Taxonomy" id="394"/>
    <lineage>
        <taxon>Bacteria</taxon>
        <taxon>Pseudomonadati</taxon>
        <taxon>Pseudomonadota</taxon>
        <taxon>Alphaproteobacteria</taxon>
        <taxon>Hyphomicrobiales</taxon>
        <taxon>Rhizobiaceae</taxon>
        <taxon>Sinorhizobium/Ensifer group</taxon>
        <taxon>Sinorhizobium</taxon>
    </lineage>
</organism>